<sequence length="297" mass="32438">MMIKQYLQVTKPGIIFGNLISVIGGFLLAAKGQIDYALFLATLLGVSLVVASGCVFNNYIDRDIDRKMERTKNRVLVKGLISPKVSLVYATVLGIAGFALLYLAANPLAMWLAVMGFVVYVGVYSLYMKRKSVYGTLIGSLSGAAPPVIGYCAVSDGFDTGALILLLIFSLWQMPHSYAIAIFRFKDYQAASIPVLPVKRGISVTKHHITLYIIGFMVATLMLTLSGYAGYKYLIVAASVSVWWLGMALQGYKSANDDKVWARKLFIFSIVAINSLSVMMSVDFMVPSANNLLTYLG</sequence>
<accession>Q2NV87</accession>
<evidence type="ECO:0000255" key="1">
    <source>
        <dbReference type="HAMAP-Rule" id="MF_00154"/>
    </source>
</evidence>
<evidence type="ECO:0000305" key="2"/>
<keyword id="KW-0997">Cell inner membrane</keyword>
<keyword id="KW-1003">Cell membrane</keyword>
<keyword id="KW-0350">Heme biosynthesis</keyword>
<keyword id="KW-0472">Membrane</keyword>
<keyword id="KW-0808">Transferase</keyword>
<keyword id="KW-0812">Transmembrane</keyword>
<keyword id="KW-1133">Transmembrane helix</keyword>
<protein>
    <recommendedName>
        <fullName evidence="1">Protoheme IX farnesyltransferase</fullName>
        <ecNumber evidence="1">2.5.1.141</ecNumber>
    </recommendedName>
    <alternativeName>
        <fullName evidence="1">Heme B farnesyltransferase</fullName>
    </alternativeName>
    <alternativeName>
        <fullName evidence="1">Heme O synthase</fullName>
    </alternativeName>
</protein>
<comment type="function">
    <text evidence="1">Converts heme B (protoheme IX) to heme O by substitution of the vinyl group on carbon 2 of heme B porphyrin ring with a hydroxyethyl farnesyl side group.</text>
</comment>
<comment type="catalytic activity">
    <reaction evidence="1">
        <text>heme b + (2E,6E)-farnesyl diphosphate + H2O = Fe(II)-heme o + diphosphate</text>
        <dbReference type="Rhea" id="RHEA:28070"/>
        <dbReference type="ChEBI" id="CHEBI:15377"/>
        <dbReference type="ChEBI" id="CHEBI:33019"/>
        <dbReference type="ChEBI" id="CHEBI:60344"/>
        <dbReference type="ChEBI" id="CHEBI:60530"/>
        <dbReference type="ChEBI" id="CHEBI:175763"/>
        <dbReference type="EC" id="2.5.1.141"/>
    </reaction>
</comment>
<comment type="pathway">
    <text evidence="1">Porphyrin-containing compound metabolism; heme O biosynthesis; heme O from protoheme: step 1/1.</text>
</comment>
<comment type="subcellular location">
    <subcellularLocation>
        <location evidence="1">Cell inner membrane</location>
        <topology evidence="1">Multi-pass membrane protein</topology>
    </subcellularLocation>
</comment>
<comment type="miscellaneous">
    <text evidence="1">Carbon 2 of the heme B porphyrin ring is defined according to the Fischer nomenclature.</text>
</comment>
<comment type="similarity">
    <text evidence="1">Belongs to the UbiA prenyltransferase family. Protoheme IX farnesyltransferase subfamily.</text>
</comment>
<comment type="sequence caution" evidence="2">
    <conflict type="erroneous initiation">
        <sequence resource="EMBL-CDS" id="BAE73938"/>
    </conflict>
</comment>
<reference key="1">
    <citation type="journal article" date="2006" name="Genome Res.">
        <title>Massive genome erosion and functional adaptations provide insights into the symbiotic lifestyle of Sodalis glossinidius in the tsetse host.</title>
        <authorList>
            <person name="Toh H."/>
            <person name="Weiss B.L."/>
            <person name="Perkin S.A.H."/>
            <person name="Yamashita A."/>
            <person name="Oshima K."/>
            <person name="Hattori M."/>
            <person name="Aksoy S."/>
        </authorList>
    </citation>
    <scope>NUCLEOTIDE SEQUENCE [LARGE SCALE GENOMIC DNA]</scope>
    <source>
        <strain>morsitans</strain>
    </source>
</reference>
<gene>
    <name evidence="1" type="primary">cyoE</name>
    <name type="ordered locus">SG0663</name>
</gene>
<dbReference type="EC" id="2.5.1.141" evidence="1"/>
<dbReference type="EMBL" id="AP008232">
    <property type="protein sequence ID" value="BAE73938.1"/>
    <property type="status" value="ALT_INIT"/>
    <property type="molecule type" value="Genomic_DNA"/>
</dbReference>
<dbReference type="RefSeq" id="WP_011410526.1">
    <property type="nucleotide sequence ID" value="NZ_LN854557.1"/>
</dbReference>
<dbReference type="SMR" id="Q2NV87"/>
<dbReference type="STRING" id="343509.SG0663"/>
<dbReference type="KEGG" id="sgl:SG0663"/>
<dbReference type="eggNOG" id="COG0109">
    <property type="taxonomic scope" value="Bacteria"/>
</dbReference>
<dbReference type="HOGENOM" id="CLU_029631_0_0_6"/>
<dbReference type="OrthoDB" id="9814417at2"/>
<dbReference type="UniPathway" id="UPA00834">
    <property type="reaction ID" value="UER00712"/>
</dbReference>
<dbReference type="Proteomes" id="UP000001932">
    <property type="component" value="Chromosome"/>
</dbReference>
<dbReference type="GO" id="GO:0005886">
    <property type="term" value="C:plasma membrane"/>
    <property type="evidence" value="ECO:0007669"/>
    <property type="project" value="UniProtKB-SubCell"/>
</dbReference>
<dbReference type="GO" id="GO:0008495">
    <property type="term" value="F:protoheme IX farnesyltransferase activity"/>
    <property type="evidence" value="ECO:0007669"/>
    <property type="project" value="UniProtKB-UniRule"/>
</dbReference>
<dbReference type="GO" id="GO:0048034">
    <property type="term" value="P:heme O biosynthetic process"/>
    <property type="evidence" value="ECO:0007669"/>
    <property type="project" value="UniProtKB-UniRule"/>
</dbReference>
<dbReference type="CDD" id="cd13957">
    <property type="entry name" value="PT_UbiA_Cox10"/>
    <property type="match status" value="1"/>
</dbReference>
<dbReference type="FunFam" id="1.10.357.140:FF:000001">
    <property type="entry name" value="Protoheme IX farnesyltransferase"/>
    <property type="match status" value="1"/>
</dbReference>
<dbReference type="Gene3D" id="1.10.357.140">
    <property type="entry name" value="UbiA prenyltransferase"/>
    <property type="match status" value="1"/>
</dbReference>
<dbReference type="HAMAP" id="MF_00154">
    <property type="entry name" value="CyoE_CtaB"/>
    <property type="match status" value="1"/>
</dbReference>
<dbReference type="InterPro" id="IPR006369">
    <property type="entry name" value="Protohaem_IX_farnesylTrfase"/>
</dbReference>
<dbReference type="InterPro" id="IPR000537">
    <property type="entry name" value="UbiA_prenyltransferase"/>
</dbReference>
<dbReference type="InterPro" id="IPR030470">
    <property type="entry name" value="UbiA_prenylTrfase_CS"/>
</dbReference>
<dbReference type="InterPro" id="IPR044878">
    <property type="entry name" value="UbiA_sf"/>
</dbReference>
<dbReference type="NCBIfam" id="TIGR01473">
    <property type="entry name" value="cyoE_ctaB"/>
    <property type="match status" value="1"/>
</dbReference>
<dbReference type="NCBIfam" id="NF003348">
    <property type="entry name" value="PRK04375.1-1"/>
    <property type="match status" value="1"/>
</dbReference>
<dbReference type="PANTHER" id="PTHR43448">
    <property type="entry name" value="PROTOHEME IX FARNESYLTRANSFERASE, MITOCHONDRIAL"/>
    <property type="match status" value="1"/>
</dbReference>
<dbReference type="PANTHER" id="PTHR43448:SF2">
    <property type="entry name" value="PROTOHEME IX FARNESYLTRANSFERASE, MITOCHONDRIAL"/>
    <property type="match status" value="1"/>
</dbReference>
<dbReference type="Pfam" id="PF01040">
    <property type="entry name" value="UbiA"/>
    <property type="match status" value="1"/>
</dbReference>
<dbReference type="PROSITE" id="PS00943">
    <property type="entry name" value="UBIA"/>
    <property type="match status" value="1"/>
</dbReference>
<proteinExistence type="inferred from homology"/>
<feature type="chain" id="PRO_0000326960" description="Protoheme IX farnesyltransferase">
    <location>
        <begin position="1"/>
        <end position="297"/>
    </location>
</feature>
<feature type="transmembrane region" description="Helical" evidence="1">
    <location>
        <begin position="12"/>
        <end position="32"/>
    </location>
</feature>
<feature type="transmembrane region" description="Helical" evidence="1">
    <location>
        <begin position="36"/>
        <end position="56"/>
    </location>
</feature>
<feature type="transmembrane region" description="Helical" evidence="1">
    <location>
        <begin position="85"/>
        <end position="105"/>
    </location>
</feature>
<feature type="transmembrane region" description="Helical" evidence="1">
    <location>
        <begin position="108"/>
        <end position="128"/>
    </location>
</feature>
<feature type="transmembrane region" description="Helical" evidence="1">
    <location>
        <begin position="133"/>
        <end position="153"/>
    </location>
</feature>
<feature type="transmembrane region" description="Helical" evidence="1">
    <location>
        <begin position="163"/>
        <end position="183"/>
    </location>
</feature>
<feature type="transmembrane region" description="Helical" evidence="1">
    <location>
        <begin position="209"/>
        <end position="229"/>
    </location>
</feature>
<feature type="transmembrane region" description="Helical" evidence="1">
    <location>
        <begin position="230"/>
        <end position="250"/>
    </location>
</feature>
<feature type="transmembrane region" description="Helical" evidence="1">
    <location>
        <begin position="266"/>
        <end position="286"/>
    </location>
</feature>
<name>CYOE_SODGM</name>
<organism>
    <name type="scientific">Sodalis glossinidius (strain morsitans)</name>
    <dbReference type="NCBI Taxonomy" id="343509"/>
    <lineage>
        <taxon>Bacteria</taxon>
        <taxon>Pseudomonadati</taxon>
        <taxon>Pseudomonadota</taxon>
        <taxon>Gammaproteobacteria</taxon>
        <taxon>Enterobacterales</taxon>
        <taxon>Bruguierivoracaceae</taxon>
        <taxon>Sodalis</taxon>
    </lineage>
</organism>